<comment type="similarity">
    <text evidence="1">Belongs to the peptidase U32 family.</text>
</comment>
<gene>
    <name type="ordered locus">MJ1657</name>
</gene>
<keyword id="KW-0378">Hydrolase</keyword>
<keyword id="KW-0645">Protease</keyword>
<keyword id="KW-1185">Reference proteome</keyword>
<evidence type="ECO:0000305" key="1"/>
<dbReference type="EC" id="3.4.-.-"/>
<dbReference type="EMBL" id="L77117">
    <property type="protein sequence ID" value="AAB99684.1"/>
    <property type="molecule type" value="Genomic_DNA"/>
</dbReference>
<dbReference type="PIR" id="G64506">
    <property type="entry name" value="G64506"/>
</dbReference>
<dbReference type="RefSeq" id="WP_010871181.1">
    <property type="nucleotide sequence ID" value="NC_000909.1"/>
</dbReference>
<dbReference type="SMR" id="Q59051"/>
<dbReference type="STRING" id="243232.MJ_1657"/>
<dbReference type="PaxDb" id="243232-MJ_1657"/>
<dbReference type="DNASU" id="1452566"/>
<dbReference type="EnsemblBacteria" id="AAB99684">
    <property type="protein sequence ID" value="AAB99684"/>
    <property type="gene ID" value="MJ_1657"/>
</dbReference>
<dbReference type="GeneID" id="1452566"/>
<dbReference type="KEGG" id="mja:MJ_1657"/>
<dbReference type="eggNOG" id="arCOG03202">
    <property type="taxonomic scope" value="Archaea"/>
</dbReference>
<dbReference type="HOGENOM" id="CLU_053295_0_0_2"/>
<dbReference type="InParanoid" id="Q59051"/>
<dbReference type="OrthoDB" id="120329at2157"/>
<dbReference type="PhylomeDB" id="Q59051"/>
<dbReference type="Proteomes" id="UP000000805">
    <property type="component" value="Chromosome"/>
</dbReference>
<dbReference type="GO" id="GO:0008233">
    <property type="term" value="F:peptidase activity"/>
    <property type="evidence" value="ECO:0007669"/>
    <property type="project" value="UniProtKB-KW"/>
</dbReference>
<dbReference type="GO" id="GO:0009058">
    <property type="term" value="P:biosynthetic process"/>
    <property type="evidence" value="ECO:0007669"/>
    <property type="project" value="UniProtKB-ARBA"/>
</dbReference>
<dbReference type="GO" id="GO:0006508">
    <property type="term" value="P:proteolysis"/>
    <property type="evidence" value="ECO:0007669"/>
    <property type="project" value="UniProtKB-KW"/>
</dbReference>
<dbReference type="InterPro" id="IPR001539">
    <property type="entry name" value="Peptidase_U32"/>
</dbReference>
<dbReference type="InterPro" id="IPR051454">
    <property type="entry name" value="RNA/ubiquinone_mod_enzymes"/>
</dbReference>
<dbReference type="PANTHER" id="PTHR30217:SF10">
    <property type="entry name" value="23S RRNA 5-HYDROXYCYTIDINE C2501 SYNTHASE"/>
    <property type="match status" value="1"/>
</dbReference>
<dbReference type="PANTHER" id="PTHR30217">
    <property type="entry name" value="PEPTIDASE U32 FAMILY"/>
    <property type="match status" value="1"/>
</dbReference>
<dbReference type="Pfam" id="PF01136">
    <property type="entry name" value="Peptidase_U32"/>
    <property type="match status" value="1"/>
</dbReference>
<accession>Q59051</accession>
<proteinExistence type="inferred from homology"/>
<reference key="1">
    <citation type="journal article" date="1996" name="Science">
        <title>Complete genome sequence of the methanogenic archaeon, Methanococcus jannaschii.</title>
        <authorList>
            <person name="Bult C.J."/>
            <person name="White O."/>
            <person name="Olsen G.J."/>
            <person name="Zhou L."/>
            <person name="Fleischmann R.D."/>
            <person name="Sutton G.G."/>
            <person name="Blake J.A."/>
            <person name="FitzGerald L.M."/>
            <person name="Clayton R.A."/>
            <person name="Gocayne J.D."/>
            <person name="Kerlavage A.R."/>
            <person name="Dougherty B.A."/>
            <person name="Tomb J.-F."/>
            <person name="Adams M.D."/>
            <person name="Reich C.I."/>
            <person name="Overbeek R."/>
            <person name="Kirkness E.F."/>
            <person name="Weinstock K.G."/>
            <person name="Merrick J.M."/>
            <person name="Glodek A."/>
            <person name="Scott J.L."/>
            <person name="Geoghagen N.S.M."/>
            <person name="Weidman J.F."/>
            <person name="Fuhrmann J.L."/>
            <person name="Nguyen D."/>
            <person name="Utterback T.R."/>
            <person name="Kelley J.M."/>
            <person name="Peterson J.D."/>
            <person name="Sadow P.W."/>
            <person name="Hanna M.C."/>
            <person name="Cotton M.D."/>
            <person name="Roberts K.M."/>
            <person name="Hurst M.A."/>
            <person name="Kaine B.P."/>
            <person name="Borodovsky M."/>
            <person name="Klenk H.-P."/>
            <person name="Fraser C.M."/>
            <person name="Smith H.O."/>
            <person name="Woese C.R."/>
            <person name="Venter J.C."/>
        </authorList>
    </citation>
    <scope>NUCLEOTIDE SEQUENCE [LARGE SCALE GENOMIC DNA]</scope>
    <source>
        <strain>ATCC 43067 / DSM 2661 / JAL-1 / JCM 10045 / NBRC 100440</strain>
    </source>
</reference>
<feature type="chain" id="PRO_0000079187" description="Uncharacterized protease MJ1657">
    <location>
        <begin position="1"/>
        <end position="332"/>
    </location>
</feature>
<organism>
    <name type="scientific">Methanocaldococcus jannaschii (strain ATCC 43067 / DSM 2661 / JAL-1 / JCM 10045 / NBRC 100440)</name>
    <name type="common">Methanococcus jannaschii</name>
    <dbReference type="NCBI Taxonomy" id="243232"/>
    <lineage>
        <taxon>Archaea</taxon>
        <taxon>Methanobacteriati</taxon>
        <taxon>Methanobacteriota</taxon>
        <taxon>Methanomada group</taxon>
        <taxon>Methanococci</taxon>
        <taxon>Methanococcales</taxon>
        <taxon>Methanocaldococcaceae</taxon>
        <taxon>Methanocaldococcus</taxon>
    </lineage>
</organism>
<sequence>MFSISHPGDFESLKIIVNEINKLRKINKKLKKESFEVYVGFPEFVGTGRATLYKPNFEDLAKQVNYAKKHNVRFEVVINASCIGGMHLTPKGISYINWIFSQLKNIGVDSVALSDPYLVDLAKNNGLEVNVSCIALVDSLDKALFWDEKEVYAITLDSSINRHFDIIQEIRENVSCKLKILVNEACLYKCPMRIQHFNFFSHANAQNIPALDDYYYNKCINLRIKKKELIIKSPFIRPEDLKYYKGLVDIFKISGRSHPIGWIKRVINAYLNERWDGNLMELLDCPRELEHFYYLDNRALDGAIEYWKSCNKLCSKCNFCKELAEKALKVKY</sequence>
<name>Y1657_METJA</name>
<protein>
    <recommendedName>
        <fullName>Uncharacterized protease MJ1657</fullName>
        <ecNumber>3.4.-.-</ecNumber>
    </recommendedName>
</protein>